<organism>
    <name type="scientific">Schizosaccharomyces pombe (strain 972 / ATCC 24843)</name>
    <name type="common">Fission yeast</name>
    <dbReference type="NCBI Taxonomy" id="284812"/>
    <lineage>
        <taxon>Eukaryota</taxon>
        <taxon>Fungi</taxon>
        <taxon>Dikarya</taxon>
        <taxon>Ascomycota</taxon>
        <taxon>Taphrinomycotina</taxon>
        <taxon>Schizosaccharomycetes</taxon>
        <taxon>Schizosaccharomycetales</taxon>
        <taxon>Schizosaccharomycetaceae</taxon>
        <taxon>Schizosaccharomyces</taxon>
    </lineage>
</organism>
<protein>
    <recommendedName>
        <fullName>Uncharacterized protein CPT2R1.03</fullName>
    </recommendedName>
</protein>
<comment type="subcellular location">
    <subcellularLocation>
        <location evidence="1">Cytoplasm</location>
        <location evidence="1">Cytosol</location>
    </subcellularLocation>
    <subcellularLocation>
        <location evidence="1">Nucleus</location>
    </subcellularLocation>
</comment>
<gene>
    <name type="ORF">SPBCPT2R1.03</name>
</gene>
<name>YP43_SCHPO</name>
<accession>P0CS85</accession>
<accession>G2TRQ7</accession>
<accession>Q6MX59</accession>
<feature type="chain" id="PRO_0000416662" description="Uncharacterized protein CPT2R1.03">
    <location>
        <begin position="1"/>
        <end position="129"/>
    </location>
</feature>
<sequence length="129" mass="15130">MSIEFDDSSRHNMNMTQLMQLGAFDRRSGDDFMVQDFKNGIRDCSGIPVNNRNLAFKAYDAVKQKYDSSIKVFNIQDITIKGATWQHHNCQSTGKWYSQLYDYQNTFIGKQEYNILFDCYSYLKYNLNG</sequence>
<reference key="1">
    <citation type="journal article" date="2002" name="Nature">
        <title>The genome sequence of Schizosaccharomyces pombe.</title>
        <authorList>
            <person name="Wood V."/>
            <person name="Gwilliam R."/>
            <person name="Rajandream M.A."/>
            <person name="Lyne M.H."/>
            <person name="Lyne R."/>
            <person name="Stewart A."/>
            <person name="Sgouros J.G."/>
            <person name="Peat N."/>
            <person name="Hayles J."/>
            <person name="Baker S.G."/>
            <person name="Basham D."/>
            <person name="Bowman S."/>
            <person name="Brooks K."/>
            <person name="Brown D."/>
            <person name="Brown S."/>
            <person name="Chillingworth T."/>
            <person name="Churcher C.M."/>
            <person name="Collins M."/>
            <person name="Connor R."/>
            <person name="Cronin A."/>
            <person name="Davis P."/>
            <person name="Feltwell T."/>
            <person name="Fraser A."/>
            <person name="Gentles S."/>
            <person name="Goble A."/>
            <person name="Hamlin N."/>
            <person name="Harris D.E."/>
            <person name="Hidalgo J."/>
            <person name="Hodgson G."/>
            <person name="Holroyd S."/>
            <person name="Hornsby T."/>
            <person name="Howarth S."/>
            <person name="Huckle E.J."/>
            <person name="Hunt S."/>
            <person name="Jagels K."/>
            <person name="James K.D."/>
            <person name="Jones L."/>
            <person name="Jones M."/>
            <person name="Leather S."/>
            <person name="McDonald S."/>
            <person name="McLean J."/>
            <person name="Mooney P."/>
            <person name="Moule S."/>
            <person name="Mungall K.L."/>
            <person name="Murphy L.D."/>
            <person name="Niblett D."/>
            <person name="Odell C."/>
            <person name="Oliver K."/>
            <person name="O'Neil S."/>
            <person name="Pearson D."/>
            <person name="Quail M.A."/>
            <person name="Rabbinowitsch E."/>
            <person name="Rutherford K.M."/>
            <person name="Rutter S."/>
            <person name="Saunders D."/>
            <person name="Seeger K."/>
            <person name="Sharp S."/>
            <person name="Skelton J."/>
            <person name="Simmonds M.N."/>
            <person name="Squares R."/>
            <person name="Squares S."/>
            <person name="Stevens K."/>
            <person name="Taylor K."/>
            <person name="Taylor R.G."/>
            <person name="Tivey A."/>
            <person name="Walsh S.V."/>
            <person name="Warren T."/>
            <person name="Whitehead S."/>
            <person name="Woodward J.R."/>
            <person name="Volckaert G."/>
            <person name="Aert R."/>
            <person name="Robben J."/>
            <person name="Grymonprez B."/>
            <person name="Weltjens I."/>
            <person name="Vanstreels E."/>
            <person name="Rieger M."/>
            <person name="Schaefer M."/>
            <person name="Mueller-Auer S."/>
            <person name="Gabel C."/>
            <person name="Fuchs M."/>
            <person name="Duesterhoeft A."/>
            <person name="Fritzc C."/>
            <person name="Holzer E."/>
            <person name="Moestl D."/>
            <person name="Hilbert H."/>
            <person name="Borzym K."/>
            <person name="Langer I."/>
            <person name="Beck A."/>
            <person name="Lehrach H."/>
            <person name="Reinhardt R."/>
            <person name="Pohl T.M."/>
            <person name="Eger P."/>
            <person name="Zimmermann W."/>
            <person name="Wedler H."/>
            <person name="Wambutt R."/>
            <person name="Purnelle B."/>
            <person name="Goffeau A."/>
            <person name="Cadieu E."/>
            <person name="Dreano S."/>
            <person name="Gloux S."/>
            <person name="Lelaure V."/>
            <person name="Mottier S."/>
            <person name="Galibert F."/>
            <person name="Aves S.J."/>
            <person name="Xiang Z."/>
            <person name="Hunt C."/>
            <person name="Moore K."/>
            <person name="Hurst S.M."/>
            <person name="Lucas M."/>
            <person name="Rochet M."/>
            <person name="Gaillardin C."/>
            <person name="Tallada V.A."/>
            <person name="Garzon A."/>
            <person name="Thode G."/>
            <person name="Daga R.R."/>
            <person name="Cruzado L."/>
            <person name="Jimenez J."/>
            <person name="Sanchez M."/>
            <person name="del Rey F."/>
            <person name="Benito J."/>
            <person name="Dominguez A."/>
            <person name="Revuelta J.L."/>
            <person name="Moreno S."/>
            <person name="Armstrong J."/>
            <person name="Forsburg S.L."/>
            <person name="Cerutti L."/>
            <person name="Lowe T."/>
            <person name="McCombie W.R."/>
            <person name="Paulsen I."/>
            <person name="Potashkin J."/>
            <person name="Shpakovski G.V."/>
            <person name="Ussery D."/>
            <person name="Barrell B.G."/>
            <person name="Nurse P."/>
        </authorList>
    </citation>
    <scope>NUCLEOTIDE SEQUENCE [LARGE SCALE GENOMIC DNA]</scope>
    <source>
        <strain>972 / ATCC 24843</strain>
    </source>
</reference>
<reference key="2">
    <citation type="journal article" date="2006" name="Nat. Biotechnol.">
        <title>ORFeome cloning and global analysis of protein localization in the fission yeast Schizosaccharomyces pombe.</title>
        <authorList>
            <person name="Matsuyama A."/>
            <person name="Arai R."/>
            <person name="Yashiroda Y."/>
            <person name="Shirai A."/>
            <person name="Kamata A."/>
            <person name="Sekido S."/>
            <person name="Kobayashi Y."/>
            <person name="Hashimoto A."/>
            <person name="Hamamoto M."/>
            <person name="Hiraoka Y."/>
            <person name="Horinouchi S."/>
            <person name="Yoshida M."/>
        </authorList>
    </citation>
    <scope>SUBCELLULAR LOCATION [LARGE SCALE ANALYSIS]</scope>
</reference>
<proteinExistence type="predicted"/>
<keyword id="KW-0963">Cytoplasm</keyword>
<keyword id="KW-0539">Nucleus</keyword>
<keyword id="KW-1185">Reference proteome</keyword>
<dbReference type="EMBL" id="BX784043">
    <property type="protein sequence ID" value="CAE54418.1"/>
    <property type="molecule type" value="Genomic_DNA"/>
</dbReference>
<dbReference type="EMBL" id="CU329671">
    <property type="protein sequence ID" value="CCD31385.1"/>
    <property type="molecule type" value="Genomic_DNA"/>
</dbReference>
<dbReference type="RefSeq" id="XP_001713156.1">
    <property type="nucleotide sequence ID" value="XM_001713104.1"/>
</dbReference>
<dbReference type="RefSeq" id="XP_004001733.1">
    <property type="nucleotide sequence ID" value="XM_004001684.1"/>
</dbReference>
<dbReference type="STRING" id="284812.P0CS85"/>
<dbReference type="EnsemblFungi" id="SPBC1348.15.1">
    <property type="protein sequence ID" value="SPBC1348.15.1:pep"/>
    <property type="gene ID" value="SPBC1348.15"/>
</dbReference>
<dbReference type="EnsemblFungi" id="SPBCPT2R1.03.1">
    <property type="protein sequence ID" value="SPBCPT2R1.03.1:pep"/>
    <property type="gene ID" value="SPBCPT2R1.03"/>
</dbReference>
<dbReference type="PomBase" id="SPBCPT2R1.03"/>
<dbReference type="VEuPathDB" id="FungiDB:SPBC1348.15"/>
<dbReference type="VEuPathDB" id="FungiDB:SPBCPT2R1.03"/>
<dbReference type="HOGENOM" id="CLU_1950070_0_0_1"/>
<dbReference type="InParanoid" id="P0CS85"/>
<dbReference type="PRO" id="PR:P0CS85"/>
<dbReference type="Proteomes" id="UP000002485">
    <property type="component" value="Chromosome II"/>
</dbReference>
<dbReference type="GO" id="GO:0005829">
    <property type="term" value="C:cytosol"/>
    <property type="evidence" value="ECO:0007005"/>
    <property type="project" value="PomBase"/>
</dbReference>
<dbReference type="GO" id="GO:0005634">
    <property type="term" value="C:nucleus"/>
    <property type="evidence" value="ECO:0007005"/>
    <property type="project" value="PomBase"/>
</dbReference>
<evidence type="ECO:0000269" key="1">
    <source>
    </source>
</evidence>